<dbReference type="EC" id="2.7.1.11" evidence="1"/>
<dbReference type="EMBL" id="CP000946">
    <property type="protein sequence ID" value="ACA79700.1"/>
    <property type="molecule type" value="Genomic_DNA"/>
</dbReference>
<dbReference type="RefSeq" id="WP_000591795.1">
    <property type="nucleotide sequence ID" value="NZ_MTFT01000008.1"/>
</dbReference>
<dbReference type="SMR" id="B1IVG3"/>
<dbReference type="GeneID" id="93777982"/>
<dbReference type="KEGG" id="ecl:EcolC_4102"/>
<dbReference type="HOGENOM" id="CLU_020655_0_1_6"/>
<dbReference type="UniPathway" id="UPA00109">
    <property type="reaction ID" value="UER00182"/>
</dbReference>
<dbReference type="GO" id="GO:0005945">
    <property type="term" value="C:6-phosphofructokinase complex"/>
    <property type="evidence" value="ECO:0007669"/>
    <property type="project" value="TreeGrafter"/>
</dbReference>
<dbReference type="GO" id="GO:0003872">
    <property type="term" value="F:6-phosphofructokinase activity"/>
    <property type="evidence" value="ECO:0007669"/>
    <property type="project" value="UniProtKB-UniRule"/>
</dbReference>
<dbReference type="GO" id="GO:0016208">
    <property type="term" value="F:AMP binding"/>
    <property type="evidence" value="ECO:0007669"/>
    <property type="project" value="TreeGrafter"/>
</dbReference>
<dbReference type="GO" id="GO:0005524">
    <property type="term" value="F:ATP binding"/>
    <property type="evidence" value="ECO:0007669"/>
    <property type="project" value="UniProtKB-KW"/>
</dbReference>
<dbReference type="GO" id="GO:0070095">
    <property type="term" value="F:fructose-6-phosphate binding"/>
    <property type="evidence" value="ECO:0007669"/>
    <property type="project" value="TreeGrafter"/>
</dbReference>
<dbReference type="GO" id="GO:0042802">
    <property type="term" value="F:identical protein binding"/>
    <property type="evidence" value="ECO:0007669"/>
    <property type="project" value="TreeGrafter"/>
</dbReference>
<dbReference type="GO" id="GO:0046872">
    <property type="term" value="F:metal ion binding"/>
    <property type="evidence" value="ECO:0007669"/>
    <property type="project" value="UniProtKB-KW"/>
</dbReference>
<dbReference type="GO" id="GO:0048029">
    <property type="term" value="F:monosaccharide binding"/>
    <property type="evidence" value="ECO:0007669"/>
    <property type="project" value="TreeGrafter"/>
</dbReference>
<dbReference type="GO" id="GO:0061621">
    <property type="term" value="P:canonical glycolysis"/>
    <property type="evidence" value="ECO:0007669"/>
    <property type="project" value="TreeGrafter"/>
</dbReference>
<dbReference type="GO" id="GO:0030388">
    <property type="term" value="P:fructose 1,6-bisphosphate metabolic process"/>
    <property type="evidence" value="ECO:0007669"/>
    <property type="project" value="TreeGrafter"/>
</dbReference>
<dbReference type="GO" id="GO:0006002">
    <property type="term" value="P:fructose 6-phosphate metabolic process"/>
    <property type="evidence" value="ECO:0007669"/>
    <property type="project" value="InterPro"/>
</dbReference>
<dbReference type="CDD" id="cd00763">
    <property type="entry name" value="Bacterial_PFK"/>
    <property type="match status" value="1"/>
</dbReference>
<dbReference type="FunFam" id="3.40.50.450:FF:000001">
    <property type="entry name" value="ATP-dependent 6-phosphofructokinase"/>
    <property type="match status" value="1"/>
</dbReference>
<dbReference type="FunFam" id="3.40.50.460:FF:000002">
    <property type="entry name" value="ATP-dependent 6-phosphofructokinase"/>
    <property type="match status" value="1"/>
</dbReference>
<dbReference type="Gene3D" id="3.40.50.450">
    <property type="match status" value="1"/>
</dbReference>
<dbReference type="Gene3D" id="3.40.50.460">
    <property type="entry name" value="Phosphofructokinase domain"/>
    <property type="match status" value="1"/>
</dbReference>
<dbReference type="HAMAP" id="MF_00339">
    <property type="entry name" value="Phosphofructokinase_I_B1"/>
    <property type="match status" value="1"/>
</dbReference>
<dbReference type="InterPro" id="IPR022953">
    <property type="entry name" value="ATP_PFK"/>
</dbReference>
<dbReference type="InterPro" id="IPR012003">
    <property type="entry name" value="ATP_PFK_prok-type"/>
</dbReference>
<dbReference type="InterPro" id="IPR012828">
    <property type="entry name" value="PFKA_ATP_prok"/>
</dbReference>
<dbReference type="InterPro" id="IPR015912">
    <property type="entry name" value="Phosphofructokinase_CS"/>
</dbReference>
<dbReference type="InterPro" id="IPR000023">
    <property type="entry name" value="Phosphofructokinase_dom"/>
</dbReference>
<dbReference type="InterPro" id="IPR035966">
    <property type="entry name" value="PKF_sf"/>
</dbReference>
<dbReference type="NCBIfam" id="TIGR02482">
    <property type="entry name" value="PFKA_ATP"/>
    <property type="match status" value="1"/>
</dbReference>
<dbReference type="NCBIfam" id="NF002872">
    <property type="entry name" value="PRK03202.1"/>
    <property type="match status" value="1"/>
</dbReference>
<dbReference type="PANTHER" id="PTHR13697:SF4">
    <property type="entry name" value="ATP-DEPENDENT 6-PHOSPHOFRUCTOKINASE"/>
    <property type="match status" value="1"/>
</dbReference>
<dbReference type="PANTHER" id="PTHR13697">
    <property type="entry name" value="PHOSPHOFRUCTOKINASE"/>
    <property type="match status" value="1"/>
</dbReference>
<dbReference type="Pfam" id="PF00365">
    <property type="entry name" value="PFK"/>
    <property type="match status" value="1"/>
</dbReference>
<dbReference type="PIRSF" id="PIRSF000532">
    <property type="entry name" value="ATP_PFK_prok"/>
    <property type="match status" value="1"/>
</dbReference>
<dbReference type="PRINTS" id="PR00476">
    <property type="entry name" value="PHFRCTKINASE"/>
</dbReference>
<dbReference type="SUPFAM" id="SSF53784">
    <property type="entry name" value="Phosphofructokinase"/>
    <property type="match status" value="1"/>
</dbReference>
<dbReference type="PROSITE" id="PS00433">
    <property type="entry name" value="PHOSPHOFRUCTOKINASE"/>
    <property type="match status" value="1"/>
</dbReference>
<name>PFKA_ECOLC</name>
<sequence>MIKKIGVLTSGGDAPGMNAAIRGVVRSALTEGLEVMGIYDGYLGLYEDRMVQLDRYSVSDMINRGGTFLGSARFPEFRDENIRAVAIENLKKRGIDALVVIGGDGSYMGAMRLTEMGFPCIGLPGTIDNDIKGTDYTIGFFTALSTVVEAIDRLRDTSSSHQRISVVEVMGRYCGDLTLAAAIAGGCEFVVVPEVEFSREDLVNEIKAGIAKGKKHAIVAITEHMCDVDELAHFIEKETGRETRATVLGHIQRGGSPVPYDRILASRMGAYAIDLLLAGYGGRCVGIQNEQLVHHDIIDAIENMKRPFKGDWLDCAKKLY</sequence>
<reference key="1">
    <citation type="submission" date="2008-02" db="EMBL/GenBank/DDBJ databases">
        <title>Complete sequence of Escherichia coli C str. ATCC 8739.</title>
        <authorList>
            <person name="Copeland A."/>
            <person name="Lucas S."/>
            <person name="Lapidus A."/>
            <person name="Glavina del Rio T."/>
            <person name="Dalin E."/>
            <person name="Tice H."/>
            <person name="Bruce D."/>
            <person name="Goodwin L."/>
            <person name="Pitluck S."/>
            <person name="Kiss H."/>
            <person name="Brettin T."/>
            <person name="Detter J.C."/>
            <person name="Han C."/>
            <person name="Kuske C.R."/>
            <person name="Schmutz J."/>
            <person name="Larimer F."/>
            <person name="Land M."/>
            <person name="Hauser L."/>
            <person name="Kyrpides N."/>
            <person name="Mikhailova N."/>
            <person name="Ingram L."/>
            <person name="Richardson P."/>
        </authorList>
    </citation>
    <scope>NUCLEOTIDE SEQUENCE [LARGE SCALE GENOMIC DNA]</scope>
    <source>
        <strain>ATCC 8739 / DSM 1576 / NBRC 3972 / NCIMB 8545 / WDCM 00012 / Crooks</strain>
    </source>
</reference>
<comment type="function">
    <text evidence="1">Catalyzes the phosphorylation of D-fructose 6-phosphate to fructose 1,6-bisphosphate by ATP, the first committing step of glycolysis.</text>
</comment>
<comment type="catalytic activity">
    <reaction evidence="1">
        <text>beta-D-fructose 6-phosphate + ATP = beta-D-fructose 1,6-bisphosphate + ADP + H(+)</text>
        <dbReference type="Rhea" id="RHEA:16109"/>
        <dbReference type="ChEBI" id="CHEBI:15378"/>
        <dbReference type="ChEBI" id="CHEBI:30616"/>
        <dbReference type="ChEBI" id="CHEBI:32966"/>
        <dbReference type="ChEBI" id="CHEBI:57634"/>
        <dbReference type="ChEBI" id="CHEBI:456216"/>
        <dbReference type="EC" id="2.7.1.11"/>
    </reaction>
</comment>
<comment type="cofactor">
    <cofactor evidence="1">
        <name>Mg(2+)</name>
        <dbReference type="ChEBI" id="CHEBI:18420"/>
    </cofactor>
</comment>
<comment type="activity regulation">
    <text evidence="1">Allosterically activated by ADP and other diphosphonucleosides, and allosterically inhibited by phosphoenolpyruvate.</text>
</comment>
<comment type="pathway">
    <text evidence="1">Carbohydrate degradation; glycolysis; D-glyceraldehyde 3-phosphate and glycerone phosphate from D-glucose: step 3/4.</text>
</comment>
<comment type="subunit">
    <text evidence="1">Homotetramer.</text>
</comment>
<comment type="subcellular location">
    <subcellularLocation>
        <location evidence="1">Cytoplasm</location>
    </subcellularLocation>
</comment>
<comment type="similarity">
    <text evidence="1">Belongs to the phosphofructokinase type A (PFKA) family. ATP-dependent PFK group I subfamily. Prokaryotic clade 'B1' sub-subfamily.</text>
</comment>
<accession>B1IVG3</accession>
<proteinExistence type="inferred from homology"/>
<gene>
    <name evidence="1" type="primary">pfkA</name>
    <name type="ordered locus">EcolC_4102</name>
</gene>
<feature type="chain" id="PRO_1000079309" description="ATP-dependent 6-phosphofructokinase isozyme 1">
    <location>
        <begin position="1"/>
        <end position="320"/>
    </location>
</feature>
<feature type="active site" description="Proton acceptor" evidence="1">
    <location>
        <position position="128"/>
    </location>
</feature>
<feature type="binding site" evidence="1">
    <location>
        <position position="12"/>
    </location>
    <ligand>
        <name>ATP</name>
        <dbReference type="ChEBI" id="CHEBI:30616"/>
    </ligand>
</feature>
<feature type="binding site" evidence="1">
    <location>
        <begin position="22"/>
        <end position="26"/>
    </location>
    <ligand>
        <name>ADP</name>
        <dbReference type="ChEBI" id="CHEBI:456216"/>
        <note>allosteric activator; ligand shared between dimeric partners</note>
    </ligand>
</feature>
<feature type="binding site" evidence="1">
    <location>
        <begin position="55"/>
        <end position="60"/>
    </location>
    <ligand>
        <name>ADP</name>
        <dbReference type="ChEBI" id="CHEBI:456216"/>
        <note>allosteric activator; ligand shared between dimeric partners</note>
    </ligand>
</feature>
<feature type="binding site" evidence="1">
    <location>
        <begin position="73"/>
        <end position="74"/>
    </location>
    <ligand>
        <name>ATP</name>
        <dbReference type="ChEBI" id="CHEBI:30616"/>
    </ligand>
</feature>
<feature type="binding site" evidence="1">
    <location>
        <begin position="103"/>
        <end position="106"/>
    </location>
    <ligand>
        <name>ATP</name>
        <dbReference type="ChEBI" id="CHEBI:30616"/>
    </ligand>
</feature>
<feature type="binding site" evidence="1">
    <location>
        <position position="104"/>
    </location>
    <ligand>
        <name>Mg(2+)</name>
        <dbReference type="ChEBI" id="CHEBI:18420"/>
        <note>catalytic</note>
    </ligand>
</feature>
<feature type="binding site" description="in other chain" evidence="1">
    <location>
        <begin position="126"/>
        <end position="128"/>
    </location>
    <ligand>
        <name>substrate</name>
        <note>ligand shared between dimeric partners</note>
    </ligand>
</feature>
<feature type="binding site" description="in other chain" evidence="1">
    <location>
        <position position="155"/>
    </location>
    <ligand>
        <name>ADP</name>
        <dbReference type="ChEBI" id="CHEBI:456216"/>
        <note>allosteric activator; ligand shared between dimeric partners</note>
    </ligand>
</feature>
<feature type="binding site" evidence="1">
    <location>
        <position position="163"/>
    </location>
    <ligand>
        <name>substrate</name>
        <note>ligand shared between dimeric partners</note>
    </ligand>
</feature>
<feature type="binding site" description="in other chain" evidence="1">
    <location>
        <begin position="170"/>
        <end position="172"/>
    </location>
    <ligand>
        <name>substrate</name>
        <note>ligand shared between dimeric partners</note>
    </ligand>
</feature>
<feature type="binding site" description="in other chain" evidence="1">
    <location>
        <begin position="186"/>
        <end position="188"/>
    </location>
    <ligand>
        <name>ADP</name>
        <dbReference type="ChEBI" id="CHEBI:456216"/>
        <note>allosteric activator; ligand shared between dimeric partners</note>
    </ligand>
</feature>
<feature type="binding site" description="in other chain" evidence="1">
    <location>
        <position position="212"/>
    </location>
    <ligand>
        <name>ADP</name>
        <dbReference type="ChEBI" id="CHEBI:456216"/>
        <note>allosteric activator; ligand shared between dimeric partners</note>
    </ligand>
</feature>
<feature type="binding site" description="in other chain" evidence="1">
    <location>
        <begin position="214"/>
        <end position="216"/>
    </location>
    <ligand>
        <name>ADP</name>
        <dbReference type="ChEBI" id="CHEBI:456216"/>
        <note>allosteric activator; ligand shared between dimeric partners</note>
    </ligand>
</feature>
<feature type="binding site" description="in other chain" evidence="1">
    <location>
        <position position="223"/>
    </location>
    <ligand>
        <name>substrate</name>
        <note>ligand shared between dimeric partners</note>
    </ligand>
</feature>
<feature type="binding site" evidence="1">
    <location>
        <position position="244"/>
    </location>
    <ligand>
        <name>substrate</name>
        <note>ligand shared between dimeric partners</note>
    </ligand>
</feature>
<feature type="binding site" description="in other chain" evidence="1">
    <location>
        <begin position="250"/>
        <end position="253"/>
    </location>
    <ligand>
        <name>substrate</name>
        <note>ligand shared between dimeric partners</note>
    </ligand>
</feature>
<organism>
    <name type="scientific">Escherichia coli (strain ATCC 8739 / DSM 1576 / NBRC 3972 / NCIMB 8545 / WDCM 00012 / Crooks)</name>
    <dbReference type="NCBI Taxonomy" id="481805"/>
    <lineage>
        <taxon>Bacteria</taxon>
        <taxon>Pseudomonadati</taxon>
        <taxon>Pseudomonadota</taxon>
        <taxon>Gammaproteobacteria</taxon>
        <taxon>Enterobacterales</taxon>
        <taxon>Enterobacteriaceae</taxon>
        <taxon>Escherichia</taxon>
    </lineage>
</organism>
<protein>
    <recommendedName>
        <fullName evidence="1">ATP-dependent 6-phosphofructokinase isozyme 1</fullName>
        <shortName evidence="1">ATP-PFK 1</shortName>
        <shortName evidence="1">Phosphofructokinase 1</shortName>
        <ecNumber evidence="1">2.7.1.11</ecNumber>
    </recommendedName>
    <alternativeName>
        <fullName>6-phosphofructokinase isozyme I</fullName>
    </alternativeName>
    <alternativeName>
        <fullName evidence="1">Phosphohexokinase 1</fullName>
    </alternativeName>
</protein>
<evidence type="ECO:0000255" key="1">
    <source>
        <dbReference type="HAMAP-Rule" id="MF_00339"/>
    </source>
</evidence>
<keyword id="KW-0021">Allosteric enzyme</keyword>
<keyword id="KW-0067">ATP-binding</keyword>
<keyword id="KW-0963">Cytoplasm</keyword>
<keyword id="KW-0324">Glycolysis</keyword>
<keyword id="KW-0418">Kinase</keyword>
<keyword id="KW-0460">Magnesium</keyword>
<keyword id="KW-0479">Metal-binding</keyword>
<keyword id="KW-0547">Nucleotide-binding</keyword>
<keyword id="KW-0808">Transferase</keyword>